<keyword id="KW-0025">Alternative splicing</keyword>
<keyword id="KW-0217">Developmental protein</keyword>
<keyword id="KW-0221">Differentiation</keyword>
<keyword id="KW-0597">Phosphoprotein</keyword>
<keyword id="KW-1267">Proteomics identification</keyword>
<keyword id="KW-1185">Reference proteome</keyword>
<keyword id="KW-0964">Secreted</keyword>
<keyword id="KW-0732">Signal</keyword>
<keyword id="KW-0744">Spermatogenesis</keyword>
<protein>
    <recommendedName>
        <fullName>Spermatogenesis-associated protein 20</fullName>
    </recommendedName>
    <alternativeName>
        <fullName>Sperm-specific protein 411</fullName>
        <shortName>Ssp411</shortName>
    </alternativeName>
</protein>
<feature type="signal peptide" evidence="3">
    <location>
        <begin position="1"/>
        <end position="22"/>
    </location>
</feature>
<feature type="chain" id="PRO_0000278450" description="Spermatogenesis-associated protein 20">
    <location>
        <begin position="23"/>
        <end position="786"/>
    </location>
</feature>
<feature type="region of interest" description="Disordered" evidence="4">
    <location>
        <begin position="23"/>
        <end position="61"/>
    </location>
</feature>
<feature type="modified residue" description="Phosphoserine" evidence="2">
    <location>
        <position position="649"/>
    </location>
</feature>
<feature type="splice variant" id="VSP_023288" description="In isoform 3." evidence="7">
    <location>
        <begin position="1"/>
        <end position="44"/>
    </location>
</feature>
<feature type="splice variant" id="VSP_023289" description="In isoform 4." evidence="8">
    <original>MLGARAWLGRVLLLPRAGAGLAASR</original>
    <variation>MSHLSSPPKKHKGEHKGHSLPHGSE</variation>
    <location>
        <begin position="1"/>
        <end position="25"/>
    </location>
</feature>
<feature type="splice variant" id="VSP_023290" description="In isoform 2." evidence="7">
    <original>R</original>
    <variation>RCPGVWPRTWPHRSPSR</variation>
    <location>
        <position position="26"/>
    </location>
</feature>
<feature type="splice variant" id="VSP_023291" description="In isoform 4." evidence="8">
    <original>LMVSGYAVTGA</original>
    <variation>GAAHLRPSLSA</variation>
    <location>
        <begin position="511"/>
        <end position="521"/>
    </location>
</feature>
<feature type="splice variant" id="VSP_023292" description="In isoform 4." evidence="8">
    <location>
        <begin position="522"/>
        <end position="786"/>
    </location>
</feature>
<feature type="sequence variant" id="VAR_030777" description="In dbSNP:rs8076632." evidence="6">
    <original>Q</original>
    <variation>E</variation>
    <location>
        <position position="88"/>
    </location>
</feature>
<feature type="sequence variant" id="VAR_030778" description="In dbSNP:rs9913430." evidence="6">
    <original>S</original>
    <variation>T</variation>
    <location>
        <position position="483"/>
    </location>
</feature>
<feature type="sequence variant" id="VAR_030779" description="In dbSNP:rs8065903." evidence="5 6">
    <original>K</original>
    <variation>R</variation>
    <location>
        <position position="609"/>
    </location>
</feature>
<feature type="sequence conflict" description="In Ref. 2; BAB15051." evidence="9" ref="2">
    <original>F</original>
    <variation>L</variation>
    <location>
        <position position="356"/>
    </location>
</feature>
<feature type="sequence conflict" description="In Ref. 2; BAB15051." evidence="9" ref="2">
    <original>K</original>
    <variation>E</variation>
    <location>
        <position position="540"/>
    </location>
</feature>
<organism>
    <name type="scientific">Homo sapiens</name>
    <name type="common">Human</name>
    <dbReference type="NCBI Taxonomy" id="9606"/>
    <lineage>
        <taxon>Eukaryota</taxon>
        <taxon>Metazoa</taxon>
        <taxon>Chordata</taxon>
        <taxon>Craniata</taxon>
        <taxon>Vertebrata</taxon>
        <taxon>Euteleostomi</taxon>
        <taxon>Mammalia</taxon>
        <taxon>Eutheria</taxon>
        <taxon>Euarchontoglires</taxon>
        <taxon>Primates</taxon>
        <taxon>Haplorrhini</taxon>
        <taxon>Catarrhini</taxon>
        <taxon>Hominidae</taxon>
        <taxon>Homo</taxon>
    </lineage>
</organism>
<dbReference type="EMBL" id="DQ238597">
    <property type="protein sequence ID" value="ABB54669.1"/>
    <property type="molecule type" value="mRNA"/>
</dbReference>
<dbReference type="EMBL" id="AK025000">
    <property type="protein sequence ID" value="BAB15051.1"/>
    <property type="molecule type" value="mRNA"/>
</dbReference>
<dbReference type="EMBL" id="AC021491">
    <property type="status" value="NOT_ANNOTATED_CDS"/>
    <property type="molecule type" value="Genomic_DNA"/>
</dbReference>
<dbReference type="EMBL" id="BC017468">
    <property type="protein sequence ID" value="AAH17468.1"/>
    <property type="molecule type" value="mRNA"/>
</dbReference>
<dbReference type="EMBL" id="BC025255">
    <property type="protein sequence ID" value="AAH25255.1"/>
    <property type="molecule type" value="mRNA"/>
</dbReference>
<dbReference type="EMBL" id="BC111029">
    <property type="protein sequence ID" value="AAI11030.1"/>
    <property type="molecule type" value="mRNA"/>
</dbReference>
<dbReference type="EMBL" id="BC065526">
    <property type="protein sequence ID" value="AAH65526.1"/>
    <property type="molecule type" value="mRNA"/>
</dbReference>
<dbReference type="CCDS" id="CCDS11571.1">
    <molecule id="Q8TB22-2"/>
</dbReference>
<dbReference type="CCDS" id="CCDS58563.1">
    <molecule id="Q8TB22-1"/>
</dbReference>
<dbReference type="CCDS" id="CCDS58564.1">
    <molecule id="Q8TB22-3"/>
</dbReference>
<dbReference type="RefSeq" id="NP_001245301.1">
    <molecule id="Q8TB22-1"/>
    <property type="nucleotide sequence ID" value="NM_001258372.2"/>
</dbReference>
<dbReference type="RefSeq" id="NP_001245302.1">
    <molecule id="Q8TB22-3"/>
    <property type="nucleotide sequence ID" value="NM_001258373.2"/>
</dbReference>
<dbReference type="RefSeq" id="NP_073738.2">
    <molecule id="Q8TB22-2"/>
    <property type="nucleotide sequence ID" value="NM_022827.3"/>
</dbReference>
<dbReference type="SMR" id="Q8TB22"/>
<dbReference type="BioGRID" id="122320">
    <property type="interactions" value="59"/>
</dbReference>
<dbReference type="FunCoup" id="Q8TB22">
    <property type="interactions" value="889"/>
</dbReference>
<dbReference type="IntAct" id="Q8TB22">
    <property type="interactions" value="74"/>
</dbReference>
<dbReference type="STRING" id="9606.ENSP00000006658"/>
<dbReference type="iPTMnet" id="Q8TB22"/>
<dbReference type="PhosphoSitePlus" id="Q8TB22"/>
<dbReference type="SwissPalm" id="Q8TB22"/>
<dbReference type="BioMuta" id="SPATA20"/>
<dbReference type="DMDM" id="311033529"/>
<dbReference type="jPOST" id="Q8TB22"/>
<dbReference type="MassIVE" id="Q8TB22"/>
<dbReference type="PaxDb" id="9606-ENSP00000006658"/>
<dbReference type="PeptideAtlas" id="Q8TB22"/>
<dbReference type="ProteomicsDB" id="73947">
    <molecule id="Q8TB22-1"/>
</dbReference>
<dbReference type="ProteomicsDB" id="73948">
    <molecule id="Q8TB22-2"/>
</dbReference>
<dbReference type="ProteomicsDB" id="73949">
    <molecule id="Q8TB22-3"/>
</dbReference>
<dbReference type="ProteomicsDB" id="73950">
    <molecule id="Q8TB22-4"/>
</dbReference>
<dbReference type="Pumba" id="Q8TB22"/>
<dbReference type="Antibodypedia" id="18108">
    <property type="antibodies" value="56 antibodies from 18 providers"/>
</dbReference>
<dbReference type="DNASU" id="64847"/>
<dbReference type="Ensembl" id="ENST00000006658.11">
    <molecule id="Q8TB22-2"/>
    <property type="protein sequence ID" value="ENSP00000006658.6"/>
    <property type="gene ID" value="ENSG00000006282.22"/>
</dbReference>
<dbReference type="Ensembl" id="ENST00000356488.8">
    <molecule id="Q8TB22-1"/>
    <property type="protein sequence ID" value="ENSP00000348878.4"/>
    <property type="gene ID" value="ENSG00000006282.22"/>
</dbReference>
<dbReference type="Ensembl" id="ENST00000511937.5">
    <molecule id="Q8TB22-4"/>
    <property type="protein sequence ID" value="ENSP00000489476.1"/>
    <property type="gene ID" value="ENSG00000006282.22"/>
</dbReference>
<dbReference type="GeneID" id="64847"/>
<dbReference type="KEGG" id="hsa:64847"/>
<dbReference type="MANE-Select" id="ENST00000006658.11">
    <molecule id="Q8TB22-2"/>
    <property type="protein sequence ID" value="ENSP00000006658.6"/>
    <property type="RefSeq nucleotide sequence ID" value="NM_022827.4"/>
    <property type="RefSeq protein sequence ID" value="NP_073738.2"/>
</dbReference>
<dbReference type="UCSC" id="uc002ird.4">
    <molecule id="Q8TB22-1"/>
    <property type="organism name" value="human"/>
</dbReference>
<dbReference type="AGR" id="HGNC:26125"/>
<dbReference type="CTD" id="64847"/>
<dbReference type="DisGeNET" id="64847"/>
<dbReference type="GeneCards" id="SPATA20"/>
<dbReference type="HGNC" id="HGNC:26125">
    <property type="gene designation" value="SPATA20"/>
</dbReference>
<dbReference type="HPA" id="ENSG00000006282">
    <property type="expression patterns" value="Tissue enhanced (testis)"/>
</dbReference>
<dbReference type="MIM" id="613939">
    <property type="type" value="gene"/>
</dbReference>
<dbReference type="neXtProt" id="NX_Q8TB22"/>
<dbReference type="OpenTargets" id="ENSG00000006282"/>
<dbReference type="PharmGKB" id="PA142670885"/>
<dbReference type="VEuPathDB" id="HostDB:ENSG00000006282"/>
<dbReference type="eggNOG" id="KOG2244">
    <property type="taxonomic scope" value="Eukaryota"/>
</dbReference>
<dbReference type="GeneTree" id="ENSGT00390000004836"/>
<dbReference type="HOGENOM" id="CLU_014051_4_1_1"/>
<dbReference type="InParanoid" id="Q8TB22"/>
<dbReference type="OMA" id="PFYFGTY"/>
<dbReference type="OrthoDB" id="1923667at2759"/>
<dbReference type="PAN-GO" id="Q8TB22">
    <property type="GO annotations" value="0 GO annotations based on evolutionary models"/>
</dbReference>
<dbReference type="PhylomeDB" id="Q8TB22"/>
<dbReference type="TreeFam" id="TF105663"/>
<dbReference type="PathwayCommons" id="Q8TB22"/>
<dbReference type="SignaLink" id="Q8TB22"/>
<dbReference type="BioGRID-ORCS" id="64847">
    <property type="hits" value="16 hits in 1143 CRISPR screens"/>
</dbReference>
<dbReference type="ChiTaRS" id="SPATA20">
    <property type="organism name" value="human"/>
</dbReference>
<dbReference type="GenomeRNAi" id="64847"/>
<dbReference type="Pharos" id="Q8TB22">
    <property type="development level" value="Tbio"/>
</dbReference>
<dbReference type="PRO" id="PR:Q8TB22"/>
<dbReference type="Proteomes" id="UP000005640">
    <property type="component" value="Chromosome 17"/>
</dbReference>
<dbReference type="RNAct" id="Q8TB22">
    <property type="molecule type" value="protein"/>
</dbReference>
<dbReference type="Bgee" id="ENSG00000006282">
    <property type="expression patterns" value="Expressed in left testis and 199 other cell types or tissues"/>
</dbReference>
<dbReference type="ExpressionAtlas" id="Q8TB22">
    <property type="expression patterns" value="baseline and differential"/>
</dbReference>
<dbReference type="GO" id="GO:0005576">
    <property type="term" value="C:extracellular region"/>
    <property type="evidence" value="ECO:0007669"/>
    <property type="project" value="UniProtKB-SubCell"/>
</dbReference>
<dbReference type="GO" id="GO:0005739">
    <property type="term" value="C:mitochondrion"/>
    <property type="evidence" value="ECO:0006056"/>
    <property type="project" value="FlyBase"/>
</dbReference>
<dbReference type="GO" id="GO:0005975">
    <property type="term" value="P:carbohydrate metabolic process"/>
    <property type="evidence" value="ECO:0007669"/>
    <property type="project" value="InterPro"/>
</dbReference>
<dbReference type="GO" id="GO:0030154">
    <property type="term" value="P:cell differentiation"/>
    <property type="evidence" value="ECO:0007669"/>
    <property type="project" value="UniProtKB-KW"/>
</dbReference>
<dbReference type="GO" id="GO:0007283">
    <property type="term" value="P:spermatogenesis"/>
    <property type="evidence" value="ECO:0007669"/>
    <property type="project" value="UniProtKB-KW"/>
</dbReference>
<dbReference type="CDD" id="cd02955">
    <property type="entry name" value="SSP411"/>
    <property type="match status" value="1"/>
</dbReference>
<dbReference type="Gene3D" id="1.50.10.10">
    <property type="match status" value="2"/>
</dbReference>
<dbReference type="Gene3D" id="3.40.30.10">
    <property type="entry name" value="Glutaredoxin"/>
    <property type="match status" value="1"/>
</dbReference>
<dbReference type="InterPro" id="IPR008928">
    <property type="entry name" value="6-hairpin_glycosidase_sf"/>
</dbReference>
<dbReference type="InterPro" id="IPR012341">
    <property type="entry name" value="6hp_glycosidase-like_sf"/>
</dbReference>
<dbReference type="InterPro" id="IPR024705">
    <property type="entry name" value="Ssp411"/>
</dbReference>
<dbReference type="InterPro" id="IPR004879">
    <property type="entry name" value="Ssp411-like_TRX"/>
</dbReference>
<dbReference type="InterPro" id="IPR036249">
    <property type="entry name" value="Thioredoxin-like_sf"/>
</dbReference>
<dbReference type="PANTHER" id="PTHR42899">
    <property type="entry name" value="SPERMATOGENESIS-ASSOCIATED PROTEIN 20"/>
    <property type="match status" value="1"/>
</dbReference>
<dbReference type="PANTHER" id="PTHR42899:SF1">
    <property type="entry name" value="SPERMATOGENESIS-ASSOCIATED PROTEIN 20"/>
    <property type="match status" value="1"/>
</dbReference>
<dbReference type="Pfam" id="PF03190">
    <property type="entry name" value="Thioredox_DsbH"/>
    <property type="match status" value="1"/>
</dbReference>
<dbReference type="PIRSF" id="PIRSF006402">
    <property type="entry name" value="UCP006402_thioredoxin"/>
    <property type="match status" value="1"/>
</dbReference>
<dbReference type="SUPFAM" id="SSF48208">
    <property type="entry name" value="Six-hairpin glycosidases"/>
    <property type="match status" value="1"/>
</dbReference>
<dbReference type="SUPFAM" id="SSF52833">
    <property type="entry name" value="Thioredoxin-like"/>
    <property type="match status" value="1"/>
</dbReference>
<accession>Q8TB22</accession>
<accession>Q2TA99</accession>
<accession>Q2XUZ6</accession>
<accession>Q6P0P1</accession>
<accession>Q8WVW3</accession>
<accession>Q9H747</accession>
<proteinExistence type="evidence at protein level"/>
<gene>
    <name type="primary">SPATA20</name>
</gene>
<evidence type="ECO:0000250" key="1"/>
<evidence type="ECO:0000250" key="2">
    <source>
        <dbReference type="UniProtKB" id="Q6T393"/>
    </source>
</evidence>
<evidence type="ECO:0000255" key="3"/>
<evidence type="ECO:0000256" key="4">
    <source>
        <dbReference type="SAM" id="MobiDB-lite"/>
    </source>
</evidence>
<evidence type="ECO:0000269" key="5">
    <source>
    </source>
</evidence>
<evidence type="ECO:0000269" key="6">
    <source>
    </source>
</evidence>
<evidence type="ECO:0000303" key="7">
    <source>
    </source>
</evidence>
<evidence type="ECO:0000303" key="8">
    <source ref="1"/>
</evidence>
<evidence type="ECO:0000305" key="9"/>
<reference key="1">
    <citation type="submission" date="2005-10" db="EMBL/GenBank/DDBJ databases">
        <title>Cloning and characterization of human SSP411.</title>
        <authorList>
            <person name="Shi H.-J."/>
            <person name="Wu A.Z."/>
            <person name="Santos M."/>
            <person name="Feng Z.-M."/>
            <person name="Chen C.-L.C."/>
        </authorList>
    </citation>
    <scope>NUCLEOTIDE SEQUENCE [MRNA] (ISOFORM 4)</scope>
    <source>
        <tissue>Testis</tissue>
    </source>
</reference>
<reference key="2">
    <citation type="journal article" date="2004" name="Nat. Genet.">
        <title>Complete sequencing and characterization of 21,243 full-length human cDNAs.</title>
        <authorList>
            <person name="Ota T."/>
            <person name="Suzuki Y."/>
            <person name="Nishikawa T."/>
            <person name="Otsuki T."/>
            <person name="Sugiyama T."/>
            <person name="Irie R."/>
            <person name="Wakamatsu A."/>
            <person name="Hayashi K."/>
            <person name="Sato H."/>
            <person name="Nagai K."/>
            <person name="Kimura K."/>
            <person name="Makita H."/>
            <person name="Sekine M."/>
            <person name="Obayashi M."/>
            <person name="Nishi T."/>
            <person name="Shibahara T."/>
            <person name="Tanaka T."/>
            <person name="Ishii S."/>
            <person name="Yamamoto J."/>
            <person name="Saito K."/>
            <person name="Kawai Y."/>
            <person name="Isono Y."/>
            <person name="Nakamura Y."/>
            <person name="Nagahari K."/>
            <person name="Murakami K."/>
            <person name="Yasuda T."/>
            <person name="Iwayanagi T."/>
            <person name="Wagatsuma M."/>
            <person name="Shiratori A."/>
            <person name="Sudo H."/>
            <person name="Hosoiri T."/>
            <person name="Kaku Y."/>
            <person name="Kodaira H."/>
            <person name="Kondo H."/>
            <person name="Sugawara M."/>
            <person name="Takahashi M."/>
            <person name="Kanda K."/>
            <person name="Yokoi T."/>
            <person name="Furuya T."/>
            <person name="Kikkawa E."/>
            <person name="Omura Y."/>
            <person name="Abe K."/>
            <person name="Kamihara K."/>
            <person name="Katsuta N."/>
            <person name="Sato K."/>
            <person name="Tanikawa M."/>
            <person name="Yamazaki M."/>
            <person name="Ninomiya K."/>
            <person name="Ishibashi T."/>
            <person name="Yamashita H."/>
            <person name="Murakawa K."/>
            <person name="Fujimori K."/>
            <person name="Tanai H."/>
            <person name="Kimata M."/>
            <person name="Watanabe M."/>
            <person name="Hiraoka S."/>
            <person name="Chiba Y."/>
            <person name="Ishida S."/>
            <person name="Ono Y."/>
            <person name="Takiguchi S."/>
            <person name="Watanabe S."/>
            <person name="Yosida M."/>
            <person name="Hotuta T."/>
            <person name="Kusano J."/>
            <person name="Kanehori K."/>
            <person name="Takahashi-Fujii A."/>
            <person name="Hara H."/>
            <person name="Tanase T.-O."/>
            <person name="Nomura Y."/>
            <person name="Togiya S."/>
            <person name="Komai F."/>
            <person name="Hara R."/>
            <person name="Takeuchi K."/>
            <person name="Arita M."/>
            <person name="Imose N."/>
            <person name="Musashino K."/>
            <person name="Yuuki H."/>
            <person name="Oshima A."/>
            <person name="Sasaki N."/>
            <person name="Aotsuka S."/>
            <person name="Yoshikawa Y."/>
            <person name="Matsunawa H."/>
            <person name="Ichihara T."/>
            <person name="Shiohata N."/>
            <person name="Sano S."/>
            <person name="Moriya S."/>
            <person name="Momiyama H."/>
            <person name="Satoh N."/>
            <person name="Takami S."/>
            <person name="Terashima Y."/>
            <person name="Suzuki O."/>
            <person name="Nakagawa S."/>
            <person name="Senoh A."/>
            <person name="Mizoguchi H."/>
            <person name="Goto Y."/>
            <person name="Shimizu F."/>
            <person name="Wakebe H."/>
            <person name="Hishigaki H."/>
            <person name="Watanabe T."/>
            <person name="Sugiyama A."/>
            <person name="Takemoto M."/>
            <person name="Kawakami B."/>
            <person name="Yamazaki M."/>
            <person name="Watanabe K."/>
            <person name="Kumagai A."/>
            <person name="Itakura S."/>
            <person name="Fukuzumi Y."/>
            <person name="Fujimori Y."/>
            <person name="Komiyama M."/>
            <person name="Tashiro H."/>
            <person name="Tanigami A."/>
            <person name="Fujiwara T."/>
            <person name="Ono T."/>
            <person name="Yamada K."/>
            <person name="Fujii Y."/>
            <person name="Ozaki K."/>
            <person name="Hirao M."/>
            <person name="Ohmori Y."/>
            <person name="Kawabata A."/>
            <person name="Hikiji T."/>
            <person name="Kobatake N."/>
            <person name="Inagaki H."/>
            <person name="Ikema Y."/>
            <person name="Okamoto S."/>
            <person name="Okitani R."/>
            <person name="Kawakami T."/>
            <person name="Noguchi S."/>
            <person name="Itoh T."/>
            <person name="Shigeta K."/>
            <person name="Senba T."/>
            <person name="Matsumura K."/>
            <person name="Nakajima Y."/>
            <person name="Mizuno T."/>
            <person name="Morinaga M."/>
            <person name="Sasaki M."/>
            <person name="Togashi T."/>
            <person name="Oyama M."/>
            <person name="Hata H."/>
            <person name="Watanabe M."/>
            <person name="Komatsu T."/>
            <person name="Mizushima-Sugano J."/>
            <person name="Satoh T."/>
            <person name="Shirai Y."/>
            <person name="Takahashi Y."/>
            <person name="Nakagawa K."/>
            <person name="Okumura K."/>
            <person name="Nagase T."/>
            <person name="Nomura N."/>
            <person name="Kikuchi H."/>
            <person name="Masuho Y."/>
            <person name="Yamashita R."/>
            <person name="Nakai K."/>
            <person name="Yada T."/>
            <person name="Nakamura Y."/>
            <person name="Ohara O."/>
            <person name="Isogai T."/>
            <person name="Sugano S."/>
        </authorList>
    </citation>
    <scope>NUCLEOTIDE SEQUENCE [LARGE SCALE MRNA] (ISOFORM 1)</scope>
    <scope>VARIANT ARG-609</scope>
    <source>
        <tissue>Colon</tissue>
    </source>
</reference>
<reference key="3">
    <citation type="journal article" date="2006" name="Nature">
        <title>DNA sequence of human chromosome 17 and analysis of rearrangement in the human lineage.</title>
        <authorList>
            <person name="Zody M.C."/>
            <person name="Garber M."/>
            <person name="Adams D.J."/>
            <person name="Sharpe T."/>
            <person name="Harrow J."/>
            <person name="Lupski J.R."/>
            <person name="Nicholson C."/>
            <person name="Searle S.M."/>
            <person name="Wilming L."/>
            <person name="Young S.K."/>
            <person name="Abouelleil A."/>
            <person name="Allen N.R."/>
            <person name="Bi W."/>
            <person name="Bloom T."/>
            <person name="Borowsky M.L."/>
            <person name="Bugalter B.E."/>
            <person name="Butler J."/>
            <person name="Chang J.L."/>
            <person name="Chen C.-K."/>
            <person name="Cook A."/>
            <person name="Corum B."/>
            <person name="Cuomo C.A."/>
            <person name="de Jong P.J."/>
            <person name="DeCaprio D."/>
            <person name="Dewar K."/>
            <person name="FitzGerald M."/>
            <person name="Gilbert J."/>
            <person name="Gibson R."/>
            <person name="Gnerre S."/>
            <person name="Goldstein S."/>
            <person name="Grafham D.V."/>
            <person name="Grocock R."/>
            <person name="Hafez N."/>
            <person name="Hagopian D.S."/>
            <person name="Hart E."/>
            <person name="Norman C.H."/>
            <person name="Humphray S."/>
            <person name="Jaffe D.B."/>
            <person name="Jones M."/>
            <person name="Kamal M."/>
            <person name="Khodiyar V.K."/>
            <person name="LaButti K."/>
            <person name="Laird G."/>
            <person name="Lehoczky J."/>
            <person name="Liu X."/>
            <person name="Lokyitsang T."/>
            <person name="Loveland J."/>
            <person name="Lui A."/>
            <person name="Macdonald P."/>
            <person name="Major J.E."/>
            <person name="Matthews L."/>
            <person name="Mauceli E."/>
            <person name="McCarroll S.A."/>
            <person name="Mihalev A.H."/>
            <person name="Mudge J."/>
            <person name="Nguyen C."/>
            <person name="Nicol R."/>
            <person name="O'Leary S.B."/>
            <person name="Osoegawa K."/>
            <person name="Schwartz D.C."/>
            <person name="Shaw-Smith C."/>
            <person name="Stankiewicz P."/>
            <person name="Steward C."/>
            <person name="Swarbreck D."/>
            <person name="Venkataraman V."/>
            <person name="Whittaker C.A."/>
            <person name="Yang X."/>
            <person name="Zimmer A.R."/>
            <person name="Bradley A."/>
            <person name="Hubbard T."/>
            <person name="Birren B.W."/>
            <person name="Rogers J."/>
            <person name="Lander E.S."/>
            <person name="Nusbaum C."/>
        </authorList>
    </citation>
    <scope>NUCLEOTIDE SEQUENCE [LARGE SCALE GENOMIC DNA]</scope>
</reference>
<reference key="4">
    <citation type="journal article" date="2004" name="Genome Res.">
        <title>The status, quality, and expansion of the NIH full-length cDNA project: the Mammalian Gene Collection (MGC).</title>
        <authorList>
            <consortium name="The MGC Project Team"/>
        </authorList>
    </citation>
    <scope>NUCLEOTIDE SEQUENCE [LARGE SCALE MRNA] (ISOFORMS 1; 2 AND 3)</scope>
    <scope>VARIANTS GLU-88; THR-483 AND ARG-609</scope>
    <source>
        <tissue>Brain</tissue>
        <tissue>Pancreas</tissue>
        <tissue>Skin</tissue>
        <tissue>Uterus</tissue>
    </source>
</reference>
<sequence>MLGARAWLGRVLLLPRAGAGLAASRRGSSSRDKDRSATVSSSVPMPAGGKGSHPSSTPQRVPNRLIHEKSPYLLQHAYNPVDWYPWGQEAFDKARKENKPIFLSVGYSTCHWCHMMEEESFQNEEIGRLLSEDFVSVKVDREERPDVDKVYMTFVQATSSGGGWPMNVWLTPNLQPFVGGTYFPPEDGLTRVGFRTVLLRIREQWKQNKNTLLENSQRVTTALLARSEISVGDRQLPPSAATVNNRCFQQLDEGYDEEYGGFAEAPKFPTPVILSFLFSYWLSHRLTQDGSRAQQMALHTLKMMANGGIRDHVGQGFHRYSTDRQWHVPHFEKMLYDQAQLAVAYSQAFQLSGDEFYSDVAKGILQYVARSLSHRSGGFYSAEDADSPPERGQRPKEGAYYVWTVKEVQQLLPEPVLGATEPLTSGQLLMKHYGLTEAGNISPSQDPKGELQGQNVLTVRYSLELTAARFGLDVEAVRTLLNSGLEKLFQARKHRPKPHLDSKMLAAWNGLMVSGYAVTGAVLGQDRLINYATNGAKFLKRHMFDVASGRLMRTCYTGPGGTVEHSNPPCWGFLEDYAFVVRGLLDLYEASQESAWLEWALRLQDTQDKLFWDSQGGGYFCSEAELGAGLPLRLKDDQDGAEPSANSVSAHNLLRLHGFTGHKDWMDKCVCLLTAFSERMRRVPVALPEMVRALSAQQQTLKQIVICGDRQAKDTKALVQCVHSVYIPNKVLILADGDPSSFLSRQLPFLSTLRRLEDQATAYVCENQACSVPITDPCELRKLLHP</sequence>
<comment type="function">
    <text evidence="1">May play a role in fertility regulation.</text>
</comment>
<comment type="subcellular location">
    <subcellularLocation>
        <location evidence="9">Secreted</location>
    </subcellularLocation>
</comment>
<comment type="alternative products">
    <event type="alternative splicing"/>
    <isoform>
        <id>Q8TB22-1</id>
        <name>1</name>
        <sequence type="displayed"/>
    </isoform>
    <isoform>
        <id>Q8TB22-2</id>
        <name>2</name>
        <sequence type="described" ref="VSP_023290"/>
    </isoform>
    <isoform>
        <id>Q8TB22-3</id>
        <name>3</name>
        <sequence type="described" ref="VSP_023288"/>
    </isoform>
    <isoform>
        <id>Q8TB22-4</id>
        <name>4</name>
        <sequence type="described" ref="VSP_023289 VSP_023291 VSP_023292"/>
    </isoform>
</comment>
<comment type="miscellaneous">
    <molecule>Isoform 3</molecule>
    <text evidence="9">May be produced at very low levels due to a premature stop codon in the mRNA, leading to nonsense-mediated mRNA decay.</text>
</comment>
<name>SPT20_HUMAN</name>